<name>PYRD_TERTT</name>
<organism>
    <name type="scientific">Teredinibacter turnerae (strain ATCC 39867 / T7901)</name>
    <dbReference type="NCBI Taxonomy" id="377629"/>
    <lineage>
        <taxon>Bacteria</taxon>
        <taxon>Pseudomonadati</taxon>
        <taxon>Pseudomonadota</taxon>
        <taxon>Gammaproteobacteria</taxon>
        <taxon>Cellvibrionales</taxon>
        <taxon>Cellvibrionaceae</taxon>
        <taxon>Teredinibacter</taxon>
    </lineage>
</organism>
<feature type="chain" id="PRO_1000204320" description="Dihydroorotate dehydrogenase (quinone)">
    <location>
        <begin position="1"/>
        <end position="339"/>
    </location>
</feature>
<feature type="active site" description="Nucleophile" evidence="1">
    <location>
        <position position="174"/>
    </location>
</feature>
<feature type="binding site" evidence="1">
    <location>
        <begin position="61"/>
        <end position="65"/>
    </location>
    <ligand>
        <name>FMN</name>
        <dbReference type="ChEBI" id="CHEBI:58210"/>
    </ligand>
</feature>
<feature type="binding site" evidence="1">
    <location>
        <position position="65"/>
    </location>
    <ligand>
        <name>substrate</name>
    </ligand>
</feature>
<feature type="binding site" evidence="1">
    <location>
        <position position="85"/>
    </location>
    <ligand>
        <name>FMN</name>
        <dbReference type="ChEBI" id="CHEBI:58210"/>
    </ligand>
</feature>
<feature type="binding site" evidence="1">
    <location>
        <begin position="110"/>
        <end position="114"/>
    </location>
    <ligand>
        <name>substrate</name>
    </ligand>
</feature>
<feature type="binding site" evidence="1">
    <location>
        <position position="138"/>
    </location>
    <ligand>
        <name>FMN</name>
        <dbReference type="ChEBI" id="CHEBI:58210"/>
    </ligand>
</feature>
<feature type="binding site" evidence="1">
    <location>
        <position position="171"/>
    </location>
    <ligand>
        <name>FMN</name>
        <dbReference type="ChEBI" id="CHEBI:58210"/>
    </ligand>
</feature>
<feature type="binding site" evidence="1">
    <location>
        <position position="171"/>
    </location>
    <ligand>
        <name>substrate</name>
    </ligand>
</feature>
<feature type="binding site" evidence="1">
    <location>
        <position position="176"/>
    </location>
    <ligand>
        <name>substrate</name>
    </ligand>
</feature>
<feature type="binding site" evidence="1">
    <location>
        <position position="216"/>
    </location>
    <ligand>
        <name>FMN</name>
        <dbReference type="ChEBI" id="CHEBI:58210"/>
    </ligand>
</feature>
<feature type="binding site" evidence="1">
    <location>
        <position position="244"/>
    </location>
    <ligand>
        <name>FMN</name>
        <dbReference type="ChEBI" id="CHEBI:58210"/>
    </ligand>
</feature>
<feature type="binding site" evidence="1">
    <location>
        <begin position="245"/>
        <end position="246"/>
    </location>
    <ligand>
        <name>substrate</name>
    </ligand>
</feature>
<feature type="binding site" evidence="1">
    <location>
        <position position="267"/>
    </location>
    <ligand>
        <name>FMN</name>
        <dbReference type="ChEBI" id="CHEBI:58210"/>
    </ligand>
</feature>
<feature type="binding site" evidence="1">
    <location>
        <position position="296"/>
    </location>
    <ligand>
        <name>FMN</name>
        <dbReference type="ChEBI" id="CHEBI:58210"/>
    </ligand>
</feature>
<feature type="binding site" evidence="1">
    <location>
        <begin position="317"/>
        <end position="318"/>
    </location>
    <ligand>
        <name>FMN</name>
        <dbReference type="ChEBI" id="CHEBI:58210"/>
    </ligand>
</feature>
<gene>
    <name evidence="1" type="primary">pyrD</name>
    <name type="ordered locus">TERTU_2427</name>
</gene>
<evidence type="ECO:0000255" key="1">
    <source>
        <dbReference type="HAMAP-Rule" id="MF_00225"/>
    </source>
</evidence>
<protein>
    <recommendedName>
        <fullName evidence="1">Dihydroorotate dehydrogenase (quinone)</fullName>
        <ecNumber evidence="1">1.3.5.2</ecNumber>
    </recommendedName>
    <alternativeName>
        <fullName evidence="1">DHOdehase</fullName>
        <shortName evidence="1">DHOD</shortName>
        <shortName evidence="1">DHODase</shortName>
    </alternativeName>
    <alternativeName>
        <fullName evidence="1">Dihydroorotate oxidase</fullName>
    </alternativeName>
</protein>
<accession>C5BKZ2</accession>
<dbReference type="EC" id="1.3.5.2" evidence="1"/>
<dbReference type="EMBL" id="CP001614">
    <property type="protein sequence ID" value="ACR14008.1"/>
    <property type="molecule type" value="Genomic_DNA"/>
</dbReference>
<dbReference type="RefSeq" id="WP_015820123.1">
    <property type="nucleotide sequence ID" value="NC_012997.1"/>
</dbReference>
<dbReference type="SMR" id="C5BKZ2"/>
<dbReference type="STRING" id="377629.TERTU_2427"/>
<dbReference type="KEGG" id="ttu:TERTU_2427"/>
<dbReference type="eggNOG" id="COG0167">
    <property type="taxonomic scope" value="Bacteria"/>
</dbReference>
<dbReference type="HOGENOM" id="CLU_013640_2_0_6"/>
<dbReference type="OrthoDB" id="9802377at2"/>
<dbReference type="UniPathway" id="UPA00070">
    <property type="reaction ID" value="UER00946"/>
</dbReference>
<dbReference type="Proteomes" id="UP000009080">
    <property type="component" value="Chromosome"/>
</dbReference>
<dbReference type="GO" id="GO:0005737">
    <property type="term" value="C:cytoplasm"/>
    <property type="evidence" value="ECO:0007669"/>
    <property type="project" value="InterPro"/>
</dbReference>
<dbReference type="GO" id="GO:0005886">
    <property type="term" value="C:plasma membrane"/>
    <property type="evidence" value="ECO:0007669"/>
    <property type="project" value="UniProtKB-SubCell"/>
</dbReference>
<dbReference type="GO" id="GO:0106430">
    <property type="term" value="F:dihydroorotate dehydrogenase (quinone) activity"/>
    <property type="evidence" value="ECO:0007669"/>
    <property type="project" value="UniProtKB-EC"/>
</dbReference>
<dbReference type="GO" id="GO:0006207">
    <property type="term" value="P:'de novo' pyrimidine nucleobase biosynthetic process"/>
    <property type="evidence" value="ECO:0007669"/>
    <property type="project" value="InterPro"/>
</dbReference>
<dbReference type="GO" id="GO:0044205">
    <property type="term" value="P:'de novo' UMP biosynthetic process"/>
    <property type="evidence" value="ECO:0007669"/>
    <property type="project" value="UniProtKB-UniRule"/>
</dbReference>
<dbReference type="CDD" id="cd04738">
    <property type="entry name" value="DHOD_2_like"/>
    <property type="match status" value="1"/>
</dbReference>
<dbReference type="FunFam" id="3.20.20.70:FF:000028">
    <property type="entry name" value="Dihydroorotate dehydrogenase (quinone)"/>
    <property type="match status" value="1"/>
</dbReference>
<dbReference type="Gene3D" id="3.20.20.70">
    <property type="entry name" value="Aldolase class I"/>
    <property type="match status" value="1"/>
</dbReference>
<dbReference type="HAMAP" id="MF_00225">
    <property type="entry name" value="DHO_dh_type2"/>
    <property type="match status" value="1"/>
</dbReference>
<dbReference type="InterPro" id="IPR013785">
    <property type="entry name" value="Aldolase_TIM"/>
</dbReference>
<dbReference type="InterPro" id="IPR050074">
    <property type="entry name" value="DHO_dehydrogenase"/>
</dbReference>
<dbReference type="InterPro" id="IPR012135">
    <property type="entry name" value="Dihydroorotate_DH_1_2"/>
</dbReference>
<dbReference type="InterPro" id="IPR005719">
    <property type="entry name" value="Dihydroorotate_DH_2"/>
</dbReference>
<dbReference type="InterPro" id="IPR005720">
    <property type="entry name" value="Dihydroorotate_DH_cat"/>
</dbReference>
<dbReference type="InterPro" id="IPR001295">
    <property type="entry name" value="Dihydroorotate_DH_CS"/>
</dbReference>
<dbReference type="NCBIfam" id="NF003644">
    <property type="entry name" value="PRK05286.1-1"/>
    <property type="match status" value="1"/>
</dbReference>
<dbReference type="NCBIfam" id="NF003645">
    <property type="entry name" value="PRK05286.1-2"/>
    <property type="match status" value="1"/>
</dbReference>
<dbReference type="NCBIfam" id="NF003646">
    <property type="entry name" value="PRK05286.1-4"/>
    <property type="match status" value="1"/>
</dbReference>
<dbReference type="NCBIfam" id="NF003652">
    <property type="entry name" value="PRK05286.2-5"/>
    <property type="match status" value="1"/>
</dbReference>
<dbReference type="NCBIfam" id="TIGR01036">
    <property type="entry name" value="pyrD_sub2"/>
    <property type="match status" value="1"/>
</dbReference>
<dbReference type="PANTHER" id="PTHR48109:SF4">
    <property type="entry name" value="DIHYDROOROTATE DEHYDROGENASE (QUINONE), MITOCHONDRIAL"/>
    <property type="match status" value="1"/>
</dbReference>
<dbReference type="PANTHER" id="PTHR48109">
    <property type="entry name" value="DIHYDROOROTATE DEHYDROGENASE (QUINONE), MITOCHONDRIAL-RELATED"/>
    <property type="match status" value="1"/>
</dbReference>
<dbReference type="Pfam" id="PF01180">
    <property type="entry name" value="DHO_dh"/>
    <property type="match status" value="1"/>
</dbReference>
<dbReference type="PIRSF" id="PIRSF000164">
    <property type="entry name" value="DHO_oxidase"/>
    <property type="match status" value="1"/>
</dbReference>
<dbReference type="SUPFAM" id="SSF51395">
    <property type="entry name" value="FMN-linked oxidoreductases"/>
    <property type="match status" value="1"/>
</dbReference>
<dbReference type="PROSITE" id="PS00911">
    <property type="entry name" value="DHODEHASE_1"/>
    <property type="match status" value="1"/>
</dbReference>
<dbReference type="PROSITE" id="PS00912">
    <property type="entry name" value="DHODEHASE_2"/>
    <property type="match status" value="1"/>
</dbReference>
<sequence length="339" mass="36304">MYAFARKLLFSLDPETAHELSLDCLGAAERLQLLKPFVATPVSDPVEVMGLRFPNAVGLAAGLDKNADYFNALGQLGFGSVEVGTVTPLPQPGNPQPRLFRLIEEEGIINRMGFNNKGVAHLVAAVARRRYRGVLGINIGKNKATPEEQALSDYEKCMDAVYESADYIAINISSPNTPGLRNLQFGENLSHLLQGIKRRQALLHEATGKRVPIAVKIAPDMTDDEIKGVADALVSNQYEAVIATNTTVSRDEVPHSPHKEEMGGLSGRPVAEKSTHVIRVLAEHMQGAMPIIGVGGIMTGADAEEKIRAGASLVQLYSGFIYRGPALVSEAASAVAALS</sequence>
<comment type="function">
    <text evidence="1">Catalyzes the conversion of dihydroorotate to orotate with quinone as electron acceptor.</text>
</comment>
<comment type="catalytic activity">
    <reaction evidence="1">
        <text>(S)-dihydroorotate + a quinone = orotate + a quinol</text>
        <dbReference type="Rhea" id="RHEA:30187"/>
        <dbReference type="ChEBI" id="CHEBI:24646"/>
        <dbReference type="ChEBI" id="CHEBI:30839"/>
        <dbReference type="ChEBI" id="CHEBI:30864"/>
        <dbReference type="ChEBI" id="CHEBI:132124"/>
        <dbReference type="EC" id="1.3.5.2"/>
    </reaction>
</comment>
<comment type="cofactor">
    <cofactor evidence="1">
        <name>FMN</name>
        <dbReference type="ChEBI" id="CHEBI:58210"/>
    </cofactor>
    <text evidence="1">Binds 1 FMN per subunit.</text>
</comment>
<comment type="pathway">
    <text evidence="1">Pyrimidine metabolism; UMP biosynthesis via de novo pathway; orotate from (S)-dihydroorotate (quinone route): step 1/1.</text>
</comment>
<comment type="subunit">
    <text evidence="1">Monomer.</text>
</comment>
<comment type="subcellular location">
    <subcellularLocation>
        <location evidence="1">Cell membrane</location>
        <topology evidence="1">Peripheral membrane protein</topology>
    </subcellularLocation>
</comment>
<comment type="similarity">
    <text evidence="1">Belongs to the dihydroorotate dehydrogenase family. Type 2 subfamily.</text>
</comment>
<keyword id="KW-1003">Cell membrane</keyword>
<keyword id="KW-0285">Flavoprotein</keyword>
<keyword id="KW-0288">FMN</keyword>
<keyword id="KW-0472">Membrane</keyword>
<keyword id="KW-0560">Oxidoreductase</keyword>
<keyword id="KW-0665">Pyrimidine biosynthesis</keyword>
<keyword id="KW-1185">Reference proteome</keyword>
<reference key="1">
    <citation type="journal article" date="2009" name="PLoS ONE">
        <title>The complete genome of Teredinibacter turnerae T7901: an intracellular endosymbiont of marine wood-boring bivalves (shipworms).</title>
        <authorList>
            <person name="Yang J.C."/>
            <person name="Madupu R."/>
            <person name="Durkin A.S."/>
            <person name="Ekborg N.A."/>
            <person name="Pedamallu C.S."/>
            <person name="Hostetler J.B."/>
            <person name="Radune D."/>
            <person name="Toms B.S."/>
            <person name="Henrissat B."/>
            <person name="Coutinho P.M."/>
            <person name="Schwarz S."/>
            <person name="Field L."/>
            <person name="Trindade-Silva A.E."/>
            <person name="Soares C.A.G."/>
            <person name="Elshahawi S."/>
            <person name="Hanora A."/>
            <person name="Schmidt E.W."/>
            <person name="Haygood M.G."/>
            <person name="Posfai J."/>
            <person name="Benner J."/>
            <person name="Madinger C."/>
            <person name="Nove J."/>
            <person name="Anton B."/>
            <person name="Chaudhary K."/>
            <person name="Foster J."/>
            <person name="Holman A."/>
            <person name="Kumar S."/>
            <person name="Lessard P.A."/>
            <person name="Luyten Y.A."/>
            <person name="Slatko B."/>
            <person name="Wood N."/>
            <person name="Wu B."/>
            <person name="Teplitski M."/>
            <person name="Mougous J.D."/>
            <person name="Ward N."/>
            <person name="Eisen J.A."/>
            <person name="Badger J.H."/>
            <person name="Distel D.L."/>
        </authorList>
    </citation>
    <scope>NUCLEOTIDE SEQUENCE [LARGE SCALE GENOMIC DNA]</scope>
    <source>
        <strain>ATCC 39867 / T7901</strain>
    </source>
</reference>
<proteinExistence type="inferred from homology"/>